<protein>
    <recommendedName>
        <fullName>Twinfilin</fullName>
    </recommendedName>
</protein>
<reference key="1">
    <citation type="journal article" date="2002" name="Nature">
        <title>The genome sequence of Schizosaccharomyces pombe.</title>
        <authorList>
            <person name="Wood V."/>
            <person name="Gwilliam R."/>
            <person name="Rajandream M.A."/>
            <person name="Lyne M.H."/>
            <person name="Lyne R."/>
            <person name="Stewart A."/>
            <person name="Sgouros J.G."/>
            <person name="Peat N."/>
            <person name="Hayles J."/>
            <person name="Baker S.G."/>
            <person name="Basham D."/>
            <person name="Bowman S."/>
            <person name="Brooks K."/>
            <person name="Brown D."/>
            <person name="Brown S."/>
            <person name="Chillingworth T."/>
            <person name="Churcher C.M."/>
            <person name="Collins M."/>
            <person name="Connor R."/>
            <person name="Cronin A."/>
            <person name="Davis P."/>
            <person name="Feltwell T."/>
            <person name="Fraser A."/>
            <person name="Gentles S."/>
            <person name="Goble A."/>
            <person name="Hamlin N."/>
            <person name="Harris D.E."/>
            <person name="Hidalgo J."/>
            <person name="Hodgson G."/>
            <person name="Holroyd S."/>
            <person name="Hornsby T."/>
            <person name="Howarth S."/>
            <person name="Huckle E.J."/>
            <person name="Hunt S."/>
            <person name="Jagels K."/>
            <person name="James K.D."/>
            <person name="Jones L."/>
            <person name="Jones M."/>
            <person name="Leather S."/>
            <person name="McDonald S."/>
            <person name="McLean J."/>
            <person name="Mooney P."/>
            <person name="Moule S."/>
            <person name="Mungall K.L."/>
            <person name="Murphy L.D."/>
            <person name="Niblett D."/>
            <person name="Odell C."/>
            <person name="Oliver K."/>
            <person name="O'Neil S."/>
            <person name="Pearson D."/>
            <person name="Quail M.A."/>
            <person name="Rabbinowitsch E."/>
            <person name="Rutherford K.M."/>
            <person name="Rutter S."/>
            <person name="Saunders D."/>
            <person name="Seeger K."/>
            <person name="Sharp S."/>
            <person name="Skelton J."/>
            <person name="Simmonds M.N."/>
            <person name="Squares R."/>
            <person name="Squares S."/>
            <person name="Stevens K."/>
            <person name="Taylor K."/>
            <person name="Taylor R.G."/>
            <person name="Tivey A."/>
            <person name="Walsh S.V."/>
            <person name="Warren T."/>
            <person name="Whitehead S."/>
            <person name="Woodward J.R."/>
            <person name="Volckaert G."/>
            <person name="Aert R."/>
            <person name="Robben J."/>
            <person name="Grymonprez B."/>
            <person name="Weltjens I."/>
            <person name="Vanstreels E."/>
            <person name="Rieger M."/>
            <person name="Schaefer M."/>
            <person name="Mueller-Auer S."/>
            <person name="Gabel C."/>
            <person name="Fuchs M."/>
            <person name="Duesterhoeft A."/>
            <person name="Fritzc C."/>
            <person name="Holzer E."/>
            <person name="Moestl D."/>
            <person name="Hilbert H."/>
            <person name="Borzym K."/>
            <person name="Langer I."/>
            <person name="Beck A."/>
            <person name="Lehrach H."/>
            <person name="Reinhardt R."/>
            <person name="Pohl T.M."/>
            <person name="Eger P."/>
            <person name="Zimmermann W."/>
            <person name="Wedler H."/>
            <person name="Wambutt R."/>
            <person name="Purnelle B."/>
            <person name="Goffeau A."/>
            <person name="Cadieu E."/>
            <person name="Dreano S."/>
            <person name="Gloux S."/>
            <person name="Lelaure V."/>
            <person name="Mottier S."/>
            <person name="Galibert F."/>
            <person name="Aves S.J."/>
            <person name="Xiang Z."/>
            <person name="Hunt C."/>
            <person name="Moore K."/>
            <person name="Hurst S.M."/>
            <person name="Lucas M."/>
            <person name="Rochet M."/>
            <person name="Gaillardin C."/>
            <person name="Tallada V.A."/>
            <person name="Garzon A."/>
            <person name="Thode G."/>
            <person name="Daga R.R."/>
            <person name="Cruzado L."/>
            <person name="Jimenez J."/>
            <person name="Sanchez M."/>
            <person name="del Rey F."/>
            <person name="Benito J."/>
            <person name="Dominguez A."/>
            <person name="Revuelta J.L."/>
            <person name="Moreno S."/>
            <person name="Armstrong J."/>
            <person name="Forsburg S.L."/>
            <person name="Cerutti L."/>
            <person name="Lowe T."/>
            <person name="McCombie W.R."/>
            <person name="Paulsen I."/>
            <person name="Potashkin J."/>
            <person name="Shpakovski G.V."/>
            <person name="Ussery D."/>
            <person name="Barrell B.G."/>
            <person name="Nurse P."/>
        </authorList>
    </citation>
    <scope>NUCLEOTIDE SEQUENCE [LARGE SCALE GENOMIC DNA]</scope>
    <source>
        <strain>972 / ATCC 24843</strain>
    </source>
</reference>
<reference key="2">
    <citation type="journal article" date="2008" name="J. Proteome Res.">
        <title>Phosphoproteome analysis of fission yeast.</title>
        <authorList>
            <person name="Wilson-Grady J.T."/>
            <person name="Villen J."/>
            <person name="Gygi S.P."/>
        </authorList>
    </citation>
    <scope>PHOSPHORYLATION [LARGE SCALE ANALYSIS] AT SER-143</scope>
    <scope>IDENTIFICATION BY MASS SPECTROMETRY</scope>
</reference>
<organism>
    <name type="scientific">Schizosaccharomyces pombe (strain 972 / ATCC 24843)</name>
    <name type="common">Fission yeast</name>
    <dbReference type="NCBI Taxonomy" id="284812"/>
    <lineage>
        <taxon>Eukaryota</taxon>
        <taxon>Fungi</taxon>
        <taxon>Dikarya</taxon>
        <taxon>Ascomycota</taxon>
        <taxon>Taphrinomycotina</taxon>
        <taxon>Schizosaccharomycetes</taxon>
        <taxon>Schizosaccharomycetales</taxon>
        <taxon>Schizosaccharomycetaceae</taxon>
        <taxon>Schizosaccharomyces</taxon>
    </lineage>
</organism>
<comment type="function">
    <text evidence="1">Actin-binding protein involved in motile and morphological processes. Inhibits actin polymerization, likely by sequestering G-actin. Prevents actin filament assembly by forming a 1:1 complex with actin monomers, and inhibits the nucleotide exchange reaction of actin monomers (By similarity).</text>
</comment>
<comment type="subunit">
    <text evidence="1">Interacts with G-actin; ADP-actin form.</text>
</comment>
<comment type="subcellular location">
    <subcellularLocation>
        <location evidence="1">Cytoplasm</location>
        <location evidence="1">Cytoskeleton</location>
    </subcellularLocation>
</comment>
<comment type="similarity">
    <text evidence="5">Belongs to the actin-binding proteins ADF family. Twinfilin subfamily.</text>
</comment>
<name>TWF1_SCHPO</name>
<accession>O94399</accession>
<dbReference type="EMBL" id="CU329672">
    <property type="protein sequence ID" value="CAA22475.1"/>
    <property type="molecule type" value="Genomic_DNA"/>
</dbReference>
<dbReference type="PIR" id="T40910">
    <property type="entry name" value="T40910"/>
</dbReference>
<dbReference type="RefSeq" id="NP_588449.1">
    <property type="nucleotide sequence ID" value="NM_001023440.2"/>
</dbReference>
<dbReference type="SMR" id="O94399"/>
<dbReference type="BioGRID" id="275636">
    <property type="interactions" value="15"/>
</dbReference>
<dbReference type="FunCoup" id="O94399">
    <property type="interactions" value="211"/>
</dbReference>
<dbReference type="STRING" id="284812.O94399"/>
<dbReference type="iPTMnet" id="O94399"/>
<dbReference type="PaxDb" id="4896-SPCC126.06.1"/>
<dbReference type="EnsemblFungi" id="SPCC126.06.1">
    <property type="protein sequence ID" value="SPCC126.06.1:pep"/>
    <property type="gene ID" value="SPCC126.06"/>
</dbReference>
<dbReference type="GeneID" id="2539064"/>
<dbReference type="KEGG" id="spo:2539064"/>
<dbReference type="PomBase" id="SPCC126.06">
    <property type="gene designation" value="twf1"/>
</dbReference>
<dbReference type="VEuPathDB" id="FungiDB:SPCC126.06"/>
<dbReference type="eggNOG" id="KOG1747">
    <property type="taxonomic scope" value="Eukaryota"/>
</dbReference>
<dbReference type="HOGENOM" id="CLU_031995_0_1_1"/>
<dbReference type="InParanoid" id="O94399"/>
<dbReference type="OMA" id="YLFKHTH"/>
<dbReference type="PhylomeDB" id="O94399"/>
<dbReference type="PRO" id="PR:O94399"/>
<dbReference type="Proteomes" id="UP000002485">
    <property type="component" value="Chromosome III"/>
</dbReference>
<dbReference type="GO" id="GO:0030479">
    <property type="term" value="C:actin cortical patch"/>
    <property type="evidence" value="ECO:0000314"/>
    <property type="project" value="PomBase"/>
</dbReference>
<dbReference type="GO" id="GO:0005884">
    <property type="term" value="C:actin filament"/>
    <property type="evidence" value="ECO:0000318"/>
    <property type="project" value="GO_Central"/>
</dbReference>
<dbReference type="GO" id="GO:0032153">
    <property type="term" value="C:cell division site"/>
    <property type="evidence" value="ECO:0007005"/>
    <property type="project" value="PomBase"/>
</dbReference>
<dbReference type="GO" id="GO:0051286">
    <property type="term" value="C:cell tip"/>
    <property type="evidence" value="ECO:0007005"/>
    <property type="project" value="PomBase"/>
</dbReference>
<dbReference type="GO" id="GO:0005737">
    <property type="term" value="C:cytoplasm"/>
    <property type="evidence" value="ECO:0000318"/>
    <property type="project" value="GO_Central"/>
</dbReference>
<dbReference type="GO" id="GO:0043332">
    <property type="term" value="C:mating projection tip"/>
    <property type="evidence" value="ECO:0000314"/>
    <property type="project" value="PomBase"/>
</dbReference>
<dbReference type="GO" id="GO:0051015">
    <property type="term" value="F:actin filament binding"/>
    <property type="evidence" value="ECO:0000318"/>
    <property type="project" value="GO_Central"/>
</dbReference>
<dbReference type="GO" id="GO:0003785">
    <property type="term" value="F:actin monomer binding"/>
    <property type="evidence" value="ECO:0000318"/>
    <property type="project" value="GO_Central"/>
</dbReference>
<dbReference type="GO" id="GO:0140311">
    <property type="term" value="F:protein sequestering activity"/>
    <property type="evidence" value="ECO:0000266"/>
    <property type="project" value="PomBase"/>
</dbReference>
<dbReference type="GO" id="GO:0030042">
    <property type="term" value="P:actin filament depolymerization"/>
    <property type="evidence" value="ECO:0000318"/>
    <property type="project" value="GO_Central"/>
</dbReference>
<dbReference type="GO" id="GO:0051016">
    <property type="term" value="P:barbed-end actin filament capping"/>
    <property type="evidence" value="ECO:0000318"/>
    <property type="project" value="GO_Central"/>
</dbReference>
<dbReference type="GO" id="GO:0000747">
    <property type="term" value="P:conjugation with cellular fusion"/>
    <property type="evidence" value="ECO:0000315"/>
    <property type="project" value="PomBase"/>
</dbReference>
<dbReference type="GO" id="GO:1904600">
    <property type="term" value="P:mating projection actin fusion focus assembly"/>
    <property type="evidence" value="ECO:0000315"/>
    <property type="project" value="PomBase"/>
</dbReference>
<dbReference type="CDD" id="cd11284">
    <property type="entry name" value="ADF_Twf-C_like"/>
    <property type="match status" value="1"/>
</dbReference>
<dbReference type="CDD" id="cd11285">
    <property type="entry name" value="ADF_Twf-N_like"/>
    <property type="match status" value="1"/>
</dbReference>
<dbReference type="FunFam" id="3.40.20.10:FF:000007">
    <property type="entry name" value="Twinfilin-1 isoform 1"/>
    <property type="match status" value="1"/>
</dbReference>
<dbReference type="Gene3D" id="3.40.20.10">
    <property type="entry name" value="Severin"/>
    <property type="match status" value="2"/>
</dbReference>
<dbReference type="InterPro" id="IPR002108">
    <property type="entry name" value="ADF-H"/>
</dbReference>
<dbReference type="InterPro" id="IPR029006">
    <property type="entry name" value="ADF-H/Gelsolin-like_dom_sf"/>
</dbReference>
<dbReference type="InterPro" id="IPR028458">
    <property type="entry name" value="Twinfilin"/>
</dbReference>
<dbReference type="PANTHER" id="PTHR13759">
    <property type="entry name" value="TWINFILIN"/>
    <property type="match status" value="1"/>
</dbReference>
<dbReference type="PANTHER" id="PTHR13759:SF1">
    <property type="entry name" value="TWINFILIN"/>
    <property type="match status" value="1"/>
</dbReference>
<dbReference type="Pfam" id="PF00241">
    <property type="entry name" value="Cofilin_ADF"/>
    <property type="match status" value="2"/>
</dbReference>
<dbReference type="SMART" id="SM00102">
    <property type="entry name" value="ADF"/>
    <property type="match status" value="2"/>
</dbReference>
<dbReference type="SUPFAM" id="SSF55753">
    <property type="entry name" value="Actin depolymerizing proteins"/>
    <property type="match status" value="2"/>
</dbReference>
<dbReference type="PROSITE" id="PS51263">
    <property type="entry name" value="ADF_H"/>
    <property type="match status" value="2"/>
</dbReference>
<keyword id="KW-0009">Actin-binding</keyword>
<keyword id="KW-0963">Cytoplasm</keyword>
<keyword id="KW-0206">Cytoskeleton</keyword>
<keyword id="KW-0597">Phosphoprotein</keyword>
<keyword id="KW-1185">Reference proteome</keyword>
<keyword id="KW-0677">Repeat</keyword>
<sequence>MSASVELKPTEKFSKFLEEYSSVPVRAAIISISNENSFDVKTMVEKSESIESDFKKVRECLLGSEEPAFVLVYDDSKKNLLQLISYVPENANVRRKMLYASSRAAFVRCVTLAKLDESYFASTPEELDYQQIMKSLSKQEDQSPLRQDELERKEYNESMQSSVTHKRPLVTRGVAMSIDDKALKALSDLKSSTENNLVILSIDKEVISLSQEKQNIPPSDVKSFFSSTEPNFAFYSLPKDGSSKILFIYICPMQATVKHRMVYSSSKLGLLDSIKAELGIVIDGKIESNDAADITEKEILHAAGISSPQAETSTTKTGFSRPRPPRRR</sequence>
<gene>
    <name type="primary">twf1</name>
    <name type="ORF">SPCC126.06</name>
</gene>
<feature type="chain" id="PRO_0000214952" description="Twinfilin">
    <location>
        <begin position="1"/>
        <end position="328"/>
    </location>
</feature>
<feature type="domain" description="ADF-H 1" evidence="2">
    <location>
        <begin position="1"/>
        <end position="137"/>
    </location>
</feature>
<feature type="domain" description="ADF-H 2" evidence="2">
    <location>
        <begin position="173"/>
        <end position="304"/>
    </location>
</feature>
<feature type="region of interest" description="Disordered" evidence="3">
    <location>
        <begin position="302"/>
        <end position="328"/>
    </location>
</feature>
<feature type="compositionally biased region" description="Polar residues" evidence="3">
    <location>
        <begin position="306"/>
        <end position="318"/>
    </location>
</feature>
<feature type="modified residue" description="Phosphoserine" evidence="4">
    <location>
        <position position="143"/>
    </location>
</feature>
<evidence type="ECO:0000250" key="1"/>
<evidence type="ECO:0000255" key="2">
    <source>
        <dbReference type="PROSITE-ProRule" id="PRU00599"/>
    </source>
</evidence>
<evidence type="ECO:0000256" key="3">
    <source>
        <dbReference type="SAM" id="MobiDB-lite"/>
    </source>
</evidence>
<evidence type="ECO:0000269" key="4">
    <source>
    </source>
</evidence>
<evidence type="ECO:0000305" key="5"/>
<proteinExistence type="evidence at protein level"/>